<evidence type="ECO:0000255" key="1"/>
<evidence type="ECO:0000305" key="2"/>
<accession>Q58476</accession>
<dbReference type="EMBL" id="L77117">
    <property type="protein sequence ID" value="AAB99081.1"/>
    <property type="molecule type" value="Genomic_DNA"/>
</dbReference>
<dbReference type="PIR" id="C64434">
    <property type="entry name" value="C64434"/>
</dbReference>
<dbReference type="RefSeq" id="WP_010870588.1">
    <property type="nucleotide sequence ID" value="NC_000909.1"/>
</dbReference>
<dbReference type="STRING" id="243232.MJ_1076"/>
<dbReference type="PaxDb" id="243232-MJ_1076"/>
<dbReference type="EnsemblBacteria" id="AAB99081">
    <property type="protein sequence ID" value="AAB99081"/>
    <property type="gene ID" value="MJ_1076"/>
</dbReference>
<dbReference type="GeneID" id="1451972"/>
<dbReference type="KEGG" id="mja:MJ_1076"/>
<dbReference type="eggNOG" id="arCOG03407">
    <property type="taxonomic scope" value="Archaea"/>
</dbReference>
<dbReference type="HOGENOM" id="CLU_068608_0_0_2"/>
<dbReference type="InParanoid" id="Q58476"/>
<dbReference type="OrthoDB" id="64057at2157"/>
<dbReference type="PhylomeDB" id="Q58476"/>
<dbReference type="Proteomes" id="UP000000805">
    <property type="component" value="Chromosome"/>
</dbReference>
<dbReference type="GO" id="GO:0005524">
    <property type="term" value="F:ATP binding"/>
    <property type="evidence" value="ECO:0007669"/>
    <property type="project" value="UniProtKB-KW"/>
</dbReference>
<dbReference type="GO" id="GO:0016887">
    <property type="term" value="F:ATP hydrolysis activity"/>
    <property type="evidence" value="ECO:0007669"/>
    <property type="project" value="InterPro"/>
</dbReference>
<dbReference type="CDD" id="cd00009">
    <property type="entry name" value="AAA"/>
    <property type="match status" value="1"/>
</dbReference>
<dbReference type="Gene3D" id="3.40.50.300">
    <property type="entry name" value="P-loop containing nucleotide triphosphate hydrolases"/>
    <property type="match status" value="1"/>
</dbReference>
<dbReference type="Gene3D" id="1.10.10.10">
    <property type="entry name" value="Winged helix-like DNA-binding domain superfamily/Winged helix DNA-binding domain"/>
    <property type="match status" value="1"/>
</dbReference>
<dbReference type="InterPro" id="IPR003593">
    <property type="entry name" value="AAA+_ATPase"/>
</dbReference>
<dbReference type="InterPro" id="IPR051667">
    <property type="entry name" value="Archaeal_ATPase_domain"/>
</dbReference>
<dbReference type="InterPro" id="IPR011579">
    <property type="entry name" value="ATPase_dom"/>
</dbReference>
<dbReference type="InterPro" id="IPR049081">
    <property type="entry name" value="MJ1010-like_2nd"/>
</dbReference>
<dbReference type="InterPro" id="IPR027417">
    <property type="entry name" value="P-loop_NTPase"/>
</dbReference>
<dbReference type="InterPro" id="IPR036388">
    <property type="entry name" value="WH-like_DNA-bd_sf"/>
</dbReference>
<dbReference type="PANTHER" id="PTHR37096:SF1">
    <property type="entry name" value="AAA+ ATPASE DOMAIN-CONTAINING PROTEIN"/>
    <property type="match status" value="1"/>
</dbReference>
<dbReference type="PANTHER" id="PTHR37096">
    <property type="entry name" value="YALI0E33429P"/>
    <property type="match status" value="1"/>
</dbReference>
<dbReference type="Pfam" id="PF01637">
    <property type="entry name" value="ATPase_2"/>
    <property type="match status" value="1"/>
</dbReference>
<dbReference type="Pfam" id="PF21690">
    <property type="entry name" value="MJ1010-like_2nd"/>
    <property type="match status" value="1"/>
</dbReference>
<dbReference type="SMART" id="SM00382">
    <property type="entry name" value="AAA"/>
    <property type="match status" value="1"/>
</dbReference>
<dbReference type="SUPFAM" id="SSF52540">
    <property type="entry name" value="P-loop containing nucleoside triphosphate hydrolases"/>
    <property type="match status" value="1"/>
</dbReference>
<proteinExistence type="inferred from homology"/>
<protein>
    <recommendedName>
        <fullName>Uncharacterized ATP-binding protein MJ1076</fullName>
    </recommendedName>
</protein>
<gene>
    <name type="ordered locus">MJ1076</name>
</gene>
<reference key="1">
    <citation type="journal article" date="1996" name="Science">
        <title>Complete genome sequence of the methanogenic archaeon, Methanococcus jannaschii.</title>
        <authorList>
            <person name="Bult C.J."/>
            <person name="White O."/>
            <person name="Olsen G.J."/>
            <person name="Zhou L."/>
            <person name="Fleischmann R.D."/>
            <person name="Sutton G.G."/>
            <person name="Blake J.A."/>
            <person name="FitzGerald L.M."/>
            <person name="Clayton R.A."/>
            <person name="Gocayne J.D."/>
            <person name="Kerlavage A.R."/>
            <person name="Dougherty B.A."/>
            <person name="Tomb J.-F."/>
            <person name="Adams M.D."/>
            <person name="Reich C.I."/>
            <person name="Overbeek R."/>
            <person name="Kirkness E.F."/>
            <person name="Weinstock K.G."/>
            <person name="Merrick J.M."/>
            <person name="Glodek A."/>
            <person name="Scott J.L."/>
            <person name="Geoghagen N.S.M."/>
            <person name="Weidman J.F."/>
            <person name="Fuhrmann J.L."/>
            <person name="Nguyen D."/>
            <person name="Utterback T.R."/>
            <person name="Kelley J.M."/>
            <person name="Peterson J.D."/>
            <person name="Sadow P.W."/>
            <person name="Hanna M.C."/>
            <person name="Cotton M.D."/>
            <person name="Roberts K.M."/>
            <person name="Hurst M.A."/>
            <person name="Kaine B.P."/>
            <person name="Borodovsky M."/>
            <person name="Klenk H.-P."/>
            <person name="Fraser C.M."/>
            <person name="Smith H.O."/>
            <person name="Woese C.R."/>
            <person name="Venter J.C."/>
        </authorList>
    </citation>
    <scope>NUCLEOTIDE SEQUENCE [LARGE SCALE GENOMIC DNA]</scope>
    <source>
        <strain>ATCC 43067 / DSM 2661 / JAL-1 / JCM 10045 / NBRC 100440</strain>
    </source>
</reference>
<reference key="2">
    <citation type="journal article" date="1997" name="Science">
        <title>Evidence for a family of archaeal ATPases.</title>
        <authorList>
            <person name="Koonin E.V."/>
        </authorList>
    </citation>
    <scope>SIMILARITY</scope>
</reference>
<comment type="similarity">
    <text evidence="2">Belongs to the archaeal ATPase family.</text>
</comment>
<name>Y1076_METJA</name>
<feature type="chain" id="PRO_0000184674" description="Uncharacterized ATP-binding protein MJ1076">
    <location>
        <begin position="1"/>
        <end position="337"/>
    </location>
</feature>
<feature type="binding site" evidence="1">
    <location>
        <begin position="29"/>
        <end position="36"/>
    </location>
    <ligand>
        <name>ATP</name>
        <dbReference type="ChEBI" id="CHEBI:30616"/>
    </ligand>
</feature>
<sequence length="337" mass="40093">MRFYNREKELNYLKNYVQLEPNSILFVYGPKSSGKSTVMMRVIKELENSNIVFFYYNLRKYATPTKDEFLSIFFEKSDKKYLLNKLEINLKIFKFGIEENFDFNNIKLNDVFAKINESINTVIKDGKRPVLVIDELQKLKNIYFNSGKSLLNELFNLFVSLTKMEHLCHVICLTSDTLFIDNVYRNSSLSEASEYYLIDWLKKDDIKKILKEEGFNKKEIDYCLNYLSLPYEISQLINNKKLGLSVEETIKRWINIEADGIKYLIDTSDLNEEEIYKVLSKFKDKIKINYKKDVKKEEMKYIKFLIENEILFYDVINGIIKPTSVKKWYAIKEILDK</sequence>
<organism>
    <name type="scientific">Methanocaldococcus jannaschii (strain ATCC 43067 / DSM 2661 / JAL-1 / JCM 10045 / NBRC 100440)</name>
    <name type="common">Methanococcus jannaschii</name>
    <dbReference type="NCBI Taxonomy" id="243232"/>
    <lineage>
        <taxon>Archaea</taxon>
        <taxon>Methanobacteriati</taxon>
        <taxon>Methanobacteriota</taxon>
        <taxon>Methanomada group</taxon>
        <taxon>Methanococci</taxon>
        <taxon>Methanococcales</taxon>
        <taxon>Methanocaldococcaceae</taxon>
        <taxon>Methanocaldococcus</taxon>
    </lineage>
</organism>
<keyword id="KW-0067">ATP-binding</keyword>
<keyword id="KW-0547">Nucleotide-binding</keyword>
<keyword id="KW-1185">Reference proteome</keyword>